<sequence length="341" mass="37223">MKALSKLKAEKGIWLVDAPKPEMGHNDLLIKIKKTAICGTDMHIYNWDEWSQKTIPVPMVVGHEYVGEVVDIGQEVRGFKIGDRVSGEGHITCGHCRNCRAGRTHLCRNTSGVGVNREGSFAEYLVIPAFNAFKIPDDISDDLASIFDPFGNAVHTALSFDLVGEDVLITGAGPIGIMAAAVCRHVGARHVVITDVNEYRLELARKMGATRAVNVAQESLKDVMKELGMTEGFDVGLEMSGVPSAFHAMLDTMNHGGKIAMLGIPGGEMAIDWSKVIFKGLVIKGIYGREMFETWYKMASLIQSGLDISPIITHHYKIDDFQKGFDAMGSGQSGKVILSWD</sequence>
<comment type="function">
    <text evidence="1">Catalyzes the NAD(+)-dependent oxidation of L-threonine to 2-amino-3-ketobutyrate.</text>
</comment>
<comment type="catalytic activity">
    <reaction evidence="1">
        <text>L-threonine + NAD(+) = (2S)-2-amino-3-oxobutanoate + NADH + H(+)</text>
        <dbReference type="Rhea" id="RHEA:13161"/>
        <dbReference type="ChEBI" id="CHEBI:15378"/>
        <dbReference type="ChEBI" id="CHEBI:57540"/>
        <dbReference type="ChEBI" id="CHEBI:57926"/>
        <dbReference type="ChEBI" id="CHEBI:57945"/>
        <dbReference type="ChEBI" id="CHEBI:78948"/>
        <dbReference type="EC" id="1.1.1.103"/>
    </reaction>
</comment>
<comment type="cofactor">
    <cofactor evidence="1">
        <name>Zn(2+)</name>
        <dbReference type="ChEBI" id="CHEBI:29105"/>
    </cofactor>
    <text evidence="1">Binds 2 Zn(2+) ions per subunit.</text>
</comment>
<comment type="pathway">
    <text evidence="1">Amino-acid degradation; L-threonine degradation via oxydo-reductase pathway; glycine from L-threonine: step 1/2.</text>
</comment>
<comment type="subunit">
    <text evidence="1">Homotetramer.</text>
</comment>
<comment type="subcellular location">
    <subcellularLocation>
        <location evidence="1">Cytoplasm</location>
    </subcellularLocation>
</comment>
<comment type="similarity">
    <text evidence="1">Belongs to the zinc-containing alcohol dehydrogenase family.</text>
</comment>
<keyword id="KW-0963">Cytoplasm</keyword>
<keyword id="KW-0479">Metal-binding</keyword>
<keyword id="KW-0520">NAD</keyword>
<keyword id="KW-0560">Oxidoreductase</keyword>
<keyword id="KW-0862">Zinc</keyword>
<evidence type="ECO:0000255" key="1">
    <source>
        <dbReference type="HAMAP-Rule" id="MF_00627"/>
    </source>
</evidence>
<proteinExistence type="inferred from homology"/>
<name>TDH_SHESM</name>
<accession>Q0HDA3</accession>
<gene>
    <name evidence="1" type="primary">tdh</name>
    <name type="ordered locus">Shewmr4_3901</name>
</gene>
<protein>
    <recommendedName>
        <fullName evidence="1">L-threonine 3-dehydrogenase</fullName>
        <shortName evidence="1">TDH</shortName>
        <ecNumber evidence="1">1.1.1.103</ecNumber>
    </recommendedName>
</protein>
<dbReference type="EC" id="1.1.1.103" evidence="1"/>
<dbReference type="EMBL" id="CP000446">
    <property type="protein sequence ID" value="ABI40964.1"/>
    <property type="molecule type" value="Genomic_DNA"/>
</dbReference>
<dbReference type="RefSeq" id="WP_011624622.1">
    <property type="nucleotide sequence ID" value="NC_008321.1"/>
</dbReference>
<dbReference type="SMR" id="Q0HDA3"/>
<dbReference type="GeneID" id="94725931"/>
<dbReference type="KEGG" id="she:Shewmr4_3901"/>
<dbReference type="HOGENOM" id="CLU_026673_11_0_6"/>
<dbReference type="UniPathway" id="UPA00046">
    <property type="reaction ID" value="UER00505"/>
</dbReference>
<dbReference type="GO" id="GO:0005737">
    <property type="term" value="C:cytoplasm"/>
    <property type="evidence" value="ECO:0007669"/>
    <property type="project" value="UniProtKB-SubCell"/>
</dbReference>
<dbReference type="GO" id="GO:0008743">
    <property type="term" value="F:L-threonine 3-dehydrogenase activity"/>
    <property type="evidence" value="ECO:0007669"/>
    <property type="project" value="UniProtKB-UniRule"/>
</dbReference>
<dbReference type="GO" id="GO:0008270">
    <property type="term" value="F:zinc ion binding"/>
    <property type="evidence" value="ECO:0007669"/>
    <property type="project" value="UniProtKB-UniRule"/>
</dbReference>
<dbReference type="GO" id="GO:0019518">
    <property type="term" value="P:L-threonine catabolic process to glycine"/>
    <property type="evidence" value="ECO:0007669"/>
    <property type="project" value="UniProtKB-UniPathway"/>
</dbReference>
<dbReference type="Gene3D" id="3.90.180.10">
    <property type="entry name" value="Medium-chain alcohol dehydrogenases, catalytic domain"/>
    <property type="match status" value="1"/>
</dbReference>
<dbReference type="Gene3D" id="3.40.50.720">
    <property type="entry name" value="NAD(P)-binding Rossmann-like Domain"/>
    <property type="match status" value="1"/>
</dbReference>
<dbReference type="HAMAP" id="MF_00627">
    <property type="entry name" value="Thr_dehydrog"/>
    <property type="match status" value="1"/>
</dbReference>
<dbReference type="InterPro" id="IPR013149">
    <property type="entry name" value="ADH-like_C"/>
</dbReference>
<dbReference type="InterPro" id="IPR013154">
    <property type="entry name" value="ADH-like_N"/>
</dbReference>
<dbReference type="InterPro" id="IPR002328">
    <property type="entry name" value="ADH_Zn_CS"/>
</dbReference>
<dbReference type="InterPro" id="IPR011032">
    <property type="entry name" value="GroES-like_sf"/>
</dbReference>
<dbReference type="InterPro" id="IPR004627">
    <property type="entry name" value="L-Threonine_3-DHase"/>
</dbReference>
<dbReference type="InterPro" id="IPR036291">
    <property type="entry name" value="NAD(P)-bd_dom_sf"/>
</dbReference>
<dbReference type="InterPro" id="IPR020843">
    <property type="entry name" value="PKS_ER"/>
</dbReference>
<dbReference type="InterPro" id="IPR050129">
    <property type="entry name" value="Zn_alcohol_dh"/>
</dbReference>
<dbReference type="NCBIfam" id="NF003808">
    <property type="entry name" value="PRK05396.1"/>
    <property type="match status" value="1"/>
</dbReference>
<dbReference type="NCBIfam" id="TIGR00692">
    <property type="entry name" value="tdh"/>
    <property type="match status" value="1"/>
</dbReference>
<dbReference type="PANTHER" id="PTHR43401">
    <property type="entry name" value="L-THREONINE 3-DEHYDROGENASE"/>
    <property type="match status" value="1"/>
</dbReference>
<dbReference type="PANTHER" id="PTHR43401:SF2">
    <property type="entry name" value="L-THREONINE 3-DEHYDROGENASE"/>
    <property type="match status" value="1"/>
</dbReference>
<dbReference type="Pfam" id="PF08240">
    <property type="entry name" value="ADH_N"/>
    <property type="match status" value="1"/>
</dbReference>
<dbReference type="Pfam" id="PF00107">
    <property type="entry name" value="ADH_zinc_N"/>
    <property type="match status" value="1"/>
</dbReference>
<dbReference type="SMART" id="SM00829">
    <property type="entry name" value="PKS_ER"/>
    <property type="match status" value="1"/>
</dbReference>
<dbReference type="SUPFAM" id="SSF50129">
    <property type="entry name" value="GroES-like"/>
    <property type="match status" value="1"/>
</dbReference>
<dbReference type="SUPFAM" id="SSF51735">
    <property type="entry name" value="NAD(P)-binding Rossmann-fold domains"/>
    <property type="match status" value="1"/>
</dbReference>
<dbReference type="PROSITE" id="PS00059">
    <property type="entry name" value="ADH_ZINC"/>
    <property type="match status" value="1"/>
</dbReference>
<feature type="chain" id="PRO_1000051658" description="L-threonine 3-dehydrogenase">
    <location>
        <begin position="1"/>
        <end position="341"/>
    </location>
</feature>
<feature type="active site" description="Charge relay system" evidence="1">
    <location>
        <position position="40"/>
    </location>
</feature>
<feature type="active site" description="Charge relay system" evidence="1">
    <location>
        <position position="43"/>
    </location>
</feature>
<feature type="binding site" evidence="1">
    <location>
        <position position="38"/>
    </location>
    <ligand>
        <name>Zn(2+)</name>
        <dbReference type="ChEBI" id="CHEBI:29105"/>
        <label>1</label>
        <note>catalytic</note>
    </ligand>
</feature>
<feature type="binding site" evidence="1">
    <location>
        <position position="63"/>
    </location>
    <ligand>
        <name>Zn(2+)</name>
        <dbReference type="ChEBI" id="CHEBI:29105"/>
        <label>1</label>
        <note>catalytic</note>
    </ligand>
</feature>
<feature type="binding site" evidence="1">
    <location>
        <position position="64"/>
    </location>
    <ligand>
        <name>Zn(2+)</name>
        <dbReference type="ChEBI" id="CHEBI:29105"/>
        <label>1</label>
        <note>catalytic</note>
    </ligand>
</feature>
<feature type="binding site" evidence="1">
    <location>
        <position position="93"/>
    </location>
    <ligand>
        <name>Zn(2+)</name>
        <dbReference type="ChEBI" id="CHEBI:29105"/>
        <label>2</label>
    </ligand>
</feature>
<feature type="binding site" evidence="1">
    <location>
        <position position="96"/>
    </location>
    <ligand>
        <name>Zn(2+)</name>
        <dbReference type="ChEBI" id="CHEBI:29105"/>
        <label>2</label>
    </ligand>
</feature>
<feature type="binding site" evidence="1">
    <location>
        <position position="99"/>
    </location>
    <ligand>
        <name>Zn(2+)</name>
        <dbReference type="ChEBI" id="CHEBI:29105"/>
        <label>2</label>
    </ligand>
</feature>
<feature type="binding site" evidence="1">
    <location>
        <position position="107"/>
    </location>
    <ligand>
        <name>Zn(2+)</name>
        <dbReference type="ChEBI" id="CHEBI:29105"/>
        <label>2</label>
    </ligand>
</feature>
<feature type="binding site" evidence="1">
    <location>
        <position position="175"/>
    </location>
    <ligand>
        <name>NAD(+)</name>
        <dbReference type="ChEBI" id="CHEBI:57540"/>
    </ligand>
</feature>
<feature type="binding site" evidence="1">
    <location>
        <position position="195"/>
    </location>
    <ligand>
        <name>NAD(+)</name>
        <dbReference type="ChEBI" id="CHEBI:57540"/>
    </ligand>
</feature>
<feature type="binding site" evidence="1">
    <location>
        <position position="200"/>
    </location>
    <ligand>
        <name>NAD(+)</name>
        <dbReference type="ChEBI" id="CHEBI:57540"/>
    </ligand>
</feature>
<feature type="binding site" evidence="1">
    <location>
        <begin position="262"/>
        <end position="264"/>
    </location>
    <ligand>
        <name>NAD(+)</name>
        <dbReference type="ChEBI" id="CHEBI:57540"/>
    </ligand>
</feature>
<feature type="binding site" evidence="1">
    <location>
        <begin position="286"/>
        <end position="287"/>
    </location>
    <ligand>
        <name>NAD(+)</name>
        <dbReference type="ChEBI" id="CHEBI:57540"/>
    </ligand>
</feature>
<feature type="site" description="Important for catalytic activity for the proton relay mechanism but does not participate directly in the coordination of zinc atom" evidence="1">
    <location>
        <position position="148"/>
    </location>
</feature>
<reference key="1">
    <citation type="submission" date="2006-08" db="EMBL/GenBank/DDBJ databases">
        <title>Complete sequence of Shewanella sp. MR-4.</title>
        <authorList>
            <consortium name="US DOE Joint Genome Institute"/>
            <person name="Copeland A."/>
            <person name="Lucas S."/>
            <person name="Lapidus A."/>
            <person name="Barry K."/>
            <person name="Detter J.C."/>
            <person name="Glavina del Rio T."/>
            <person name="Hammon N."/>
            <person name="Israni S."/>
            <person name="Dalin E."/>
            <person name="Tice H."/>
            <person name="Pitluck S."/>
            <person name="Kiss H."/>
            <person name="Brettin T."/>
            <person name="Bruce D."/>
            <person name="Han C."/>
            <person name="Tapia R."/>
            <person name="Gilna P."/>
            <person name="Schmutz J."/>
            <person name="Larimer F."/>
            <person name="Land M."/>
            <person name="Hauser L."/>
            <person name="Kyrpides N."/>
            <person name="Mikhailova N."/>
            <person name="Nealson K."/>
            <person name="Konstantinidis K."/>
            <person name="Klappenbach J."/>
            <person name="Tiedje J."/>
            <person name="Richardson P."/>
        </authorList>
    </citation>
    <scope>NUCLEOTIDE SEQUENCE [LARGE SCALE GENOMIC DNA]</scope>
    <source>
        <strain>MR-4</strain>
    </source>
</reference>
<organism>
    <name type="scientific">Shewanella sp. (strain MR-4)</name>
    <dbReference type="NCBI Taxonomy" id="60480"/>
    <lineage>
        <taxon>Bacteria</taxon>
        <taxon>Pseudomonadati</taxon>
        <taxon>Pseudomonadota</taxon>
        <taxon>Gammaproteobacteria</taxon>
        <taxon>Alteromonadales</taxon>
        <taxon>Shewanellaceae</taxon>
        <taxon>Shewanella</taxon>
    </lineage>
</organism>